<accession>A0LAG9</accession>
<feature type="chain" id="PRO_1000059858" description="Small ribosomal subunit protein bS6">
    <location>
        <begin position="1"/>
        <end position="144"/>
    </location>
</feature>
<feature type="region of interest" description="Disordered" evidence="2">
    <location>
        <begin position="99"/>
        <end position="144"/>
    </location>
</feature>
<feature type="compositionally biased region" description="Basic and acidic residues" evidence="2">
    <location>
        <begin position="106"/>
        <end position="117"/>
    </location>
</feature>
<feature type="compositionally biased region" description="Acidic residues" evidence="2">
    <location>
        <begin position="128"/>
        <end position="144"/>
    </location>
</feature>
<sequence>MAFYESIYILRADLTTEQVELVNKRFSDNVAATGGKVVRTELWGRRQLAYLVKKNVKGFYVFHILEGEGSMVHDLEAKLGIDEDVLKFQHVRIEDVSDKASPLAPCEEKGEEGKAEDAADELTTFGMADDDDLGDDDDTVEAGI</sequence>
<dbReference type="EMBL" id="CP000471">
    <property type="protein sequence ID" value="ABK44962.1"/>
    <property type="molecule type" value="Genomic_DNA"/>
</dbReference>
<dbReference type="RefSeq" id="WP_011714081.1">
    <property type="nucleotide sequence ID" value="NC_008576.1"/>
</dbReference>
<dbReference type="SMR" id="A0LAG9"/>
<dbReference type="STRING" id="156889.Mmc1_2462"/>
<dbReference type="KEGG" id="mgm:Mmc1_2462"/>
<dbReference type="eggNOG" id="COG0360">
    <property type="taxonomic scope" value="Bacteria"/>
</dbReference>
<dbReference type="HOGENOM" id="CLU_113441_4_0_5"/>
<dbReference type="OrthoDB" id="9812702at2"/>
<dbReference type="Proteomes" id="UP000002586">
    <property type="component" value="Chromosome"/>
</dbReference>
<dbReference type="GO" id="GO:0005737">
    <property type="term" value="C:cytoplasm"/>
    <property type="evidence" value="ECO:0007669"/>
    <property type="project" value="UniProtKB-ARBA"/>
</dbReference>
<dbReference type="GO" id="GO:1990904">
    <property type="term" value="C:ribonucleoprotein complex"/>
    <property type="evidence" value="ECO:0007669"/>
    <property type="project" value="UniProtKB-KW"/>
</dbReference>
<dbReference type="GO" id="GO:0005840">
    <property type="term" value="C:ribosome"/>
    <property type="evidence" value="ECO:0007669"/>
    <property type="project" value="UniProtKB-KW"/>
</dbReference>
<dbReference type="GO" id="GO:0070181">
    <property type="term" value="F:small ribosomal subunit rRNA binding"/>
    <property type="evidence" value="ECO:0007669"/>
    <property type="project" value="TreeGrafter"/>
</dbReference>
<dbReference type="GO" id="GO:0003735">
    <property type="term" value="F:structural constituent of ribosome"/>
    <property type="evidence" value="ECO:0007669"/>
    <property type="project" value="InterPro"/>
</dbReference>
<dbReference type="GO" id="GO:0006412">
    <property type="term" value="P:translation"/>
    <property type="evidence" value="ECO:0007669"/>
    <property type="project" value="UniProtKB-UniRule"/>
</dbReference>
<dbReference type="CDD" id="cd00473">
    <property type="entry name" value="bS6"/>
    <property type="match status" value="1"/>
</dbReference>
<dbReference type="Gene3D" id="3.30.70.60">
    <property type="match status" value="1"/>
</dbReference>
<dbReference type="HAMAP" id="MF_00360">
    <property type="entry name" value="Ribosomal_bS6"/>
    <property type="match status" value="1"/>
</dbReference>
<dbReference type="InterPro" id="IPR000529">
    <property type="entry name" value="Ribosomal_bS6"/>
</dbReference>
<dbReference type="InterPro" id="IPR035980">
    <property type="entry name" value="Ribosomal_bS6_sf"/>
</dbReference>
<dbReference type="InterPro" id="IPR020814">
    <property type="entry name" value="Ribosomal_S6_plastid/chlpt"/>
</dbReference>
<dbReference type="InterPro" id="IPR014717">
    <property type="entry name" value="Transl_elong_EF1B/ribsomal_bS6"/>
</dbReference>
<dbReference type="NCBIfam" id="TIGR00166">
    <property type="entry name" value="S6"/>
    <property type="match status" value="1"/>
</dbReference>
<dbReference type="PANTHER" id="PTHR21011">
    <property type="entry name" value="MITOCHONDRIAL 28S RIBOSOMAL PROTEIN S6"/>
    <property type="match status" value="1"/>
</dbReference>
<dbReference type="PANTHER" id="PTHR21011:SF1">
    <property type="entry name" value="SMALL RIBOSOMAL SUBUNIT PROTEIN BS6M"/>
    <property type="match status" value="1"/>
</dbReference>
<dbReference type="Pfam" id="PF01250">
    <property type="entry name" value="Ribosomal_S6"/>
    <property type="match status" value="1"/>
</dbReference>
<dbReference type="SUPFAM" id="SSF54995">
    <property type="entry name" value="Ribosomal protein S6"/>
    <property type="match status" value="1"/>
</dbReference>
<evidence type="ECO:0000255" key="1">
    <source>
        <dbReference type="HAMAP-Rule" id="MF_00360"/>
    </source>
</evidence>
<evidence type="ECO:0000256" key="2">
    <source>
        <dbReference type="SAM" id="MobiDB-lite"/>
    </source>
</evidence>
<evidence type="ECO:0000305" key="3"/>
<reference key="1">
    <citation type="journal article" date="2009" name="Appl. Environ. Microbiol.">
        <title>Complete genome sequence of the chemolithoautotrophic marine magnetotactic coccus strain MC-1.</title>
        <authorList>
            <person name="Schubbe S."/>
            <person name="Williams T.J."/>
            <person name="Xie G."/>
            <person name="Kiss H.E."/>
            <person name="Brettin T.S."/>
            <person name="Martinez D."/>
            <person name="Ross C.A."/>
            <person name="Schuler D."/>
            <person name="Cox B.L."/>
            <person name="Nealson K.H."/>
            <person name="Bazylinski D.A."/>
        </authorList>
    </citation>
    <scope>NUCLEOTIDE SEQUENCE [LARGE SCALE GENOMIC DNA]</scope>
    <source>
        <strain>ATCC BAA-1437 / JCM 17883 / MC-1</strain>
    </source>
</reference>
<gene>
    <name evidence="1" type="primary">rpsF</name>
    <name type="ordered locus">Mmc1_2462</name>
</gene>
<comment type="function">
    <text evidence="1">Binds together with bS18 to 16S ribosomal RNA.</text>
</comment>
<comment type="similarity">
    <text evidence="1">Belongs to the bacterial ribosomal protein bS6 family.</text>
</comment>
<protein>
    <recommendedName>
        <fullName evidence="1">Small ribosomal subunit protein bS6</fullName>
    </recommendedName>
    <alternativeName>
        <fullName evidence="3">30S ribosomal protein S6</fullName>
    </alternativeName>
</protein>
<name>RS6_MAGMM</name>
<keyword id="KW-1185">Reference proteome</keyword>
<keyword id="KW-0687">Ribonucleoprotein</keyword>
<keyword id="KW-0689">Ribosomal protein</keyword>
<keyword id="KW-0694">RNA-binding</keyword>
<keyword id="KW-0699">rRNA-binding</keyword>
<proteinExistence type="inferred from homology"/>
<organism>
    <name type="scientific">Magnetococcus marinus (strain ATCC BAA-1437 / JCM 17883 / MC-1)</name>
    <dbReference type="NCBI Taxonomy" id="156889"/>
    <lineage>
        <taxon>Bacteria</taxon>
        <taxon>Pseudomonadati</taxon>
        <taxon>Pseudomonadota</taxon>
        <taxon>Alphaproteobacteria</taxon>
        <taxon>Magnetococcales</taxon>
        <taxon>Magnetococcaceae</taxon>
        <taxon>Magnetococcus</taxon>
    </lineage>
</organism>